<organism>
    <name type="scientific">Pyrococcus horikoshii (strain ATCC 700860 / DSM 12428 / JCM 9974 / NBRC 100139 / OT-3)</name>
    <dbReference type="NCBI Taxonomy" id="70601"/>
    <lineage>
        <taxon>Archaea</taxon>
        <taxon>Methanobacteriati</taxon>
        <taxon>Methanobacteriota</taxon>
        <taxon>Thermococci</taxon>
        <taxon>Thermococcales</taxon>
        <taxon>Thermococcaceae</taxon>
        <taxon>Pyrococcus</taxon>
    </lineage>
</organism>
<sequence length="393" mass="43929">MRYDVVVVGSGVAGPIVARNVAKAGFSVLLVDKKPAIGAPKQCAEGLTINAFKQFDIPYDKRFINREIYGAKIYSPSGYTAELRYKEVSGVILERKVFDKMLAYYAAKAGAEVLARTEVVDVIRREGKIVGVKAKHEGEPMEIEAKVIVAADGVESTIARKAGIDTYAPPHEFDSGYEYEMIIEGFDPDLIHLFFGNEVAPRGYVWVFPKDEDRANVGIGINSDNEKTAKYYLDKWLKENNIPRNKILEVNVGLIPVGGFVKELVKENVLVVGDAARQVNPIHGGGMAEAMKASTIASKWIIKALEEENLELLKNYKEEWWKTEGPRMEKLLRLRRAMEKLTDEDLDVFVQLVSGTDLEKIAGGNYIEVVKALMKHPKVLMSRRRLEILKALL</sequence>
<proteinExistence type="inferred from homology"/>
<accession>O57920</accession>
<name>GGR_PYRHO</name>
<protein>
    <recommendedName>
        <fullName evidence="1">Digeranylgeranylglycerophospholipid reductase</fullName>
        <shortName evidence="1">DGGGPL reductase</shortName>
        <ecNumber evidence="1">1.3.-.-</ecNumber>
    </recommendedName>
    <alternativeName>
        <fullName evidence="1">2,3-bis-O-geranylgeranylglyceryl phosphate reductase</fullName>
    </alternativeName>
    <alternativeName>
        <fullName evidence="1">Geranylgeranyl reductase</fullName>
        <shortName evidence="1">GGR</shortName>
    </alternativeName>
</protein>
<gene>
    <name type="ordered locus">PH0181</name>
</gene>
<keyword id="KW-0274">FAD</keyword>
<keyword id="KW-0285">Flavoprotein</keyword>
<keyword id="KW-0444">Lipid biosynthesis</keyword>
<keyword id="KW-0443">Lipid metabolism</keyword>
<keyword id="KW-0560">Oxidoreductase</keyword>
<keyword id="KW-0594">Phospholipid biosynthesis</keyword>
<keyword id="KW-1208">Phospholipid metabolism</keyword>
<comment type="function">
    <text evidence="1">Is involved in the reduction of 2,3-digeranylgeranylglycerophospholipids (unsaturated archaeols) into 2,3-diphytanylglycerophospholipids (saturated archaeols) in the biosynthesis of archaeal membrane lipids. Catalyzes the formation of archaetidic acid (2,3-di-O-phytanyl-sn-glyceryl phosphate) from 2,3-di-O-geranylgeranylglyceryl phosphate (DGGGP) via the hydrogenation of each double bond of the isoprenoid chains. Is also probably able to reduce double bonds of geranyl groups in CDP-2,3-bis-O-(geranylgeranyl)-sn-glycerol and archaetidylserine, thus acting at various stages in the biosynthesis of archaeal membrane lipids.</text>
</comment>
<comment type="catalytic activity">
    <reaction evidence="1">
        <text>a 2,3-bis-O-phytanyl-sn-glycerol 1-phospholipid + 8 A = a 2,3-bis-O-(geranylgeranyl)-sn-glycerol 1-phospholipid + 8 AH2</text>
        <dbReference type="Rhea" id="RHEA:64376"/>
        <dbReference type="ChEBI" id="CHEBI:13193"/>
        <dbReference type="ChEBI" id="CHEBI:17499"/>
        <dbReference type="ChEBI" id="CHEBI:138139"/>
        <dbReference type="ChEBI" id="CHEBI:138140"/>
    </reaction>
    <physiologicalReaction direction="right-to-left" evidence="1">
        <dbReference type="Rhea" id="RHEA:64378"/>
    </physiologicalReaction>
</comment>
<comment type="catalytic activity">
    <reaction evidence="1">
        <text>2,3-bis-O-(phytanyl)-sn-glycerol 1-phosphate + 8 A = 2,3-bis-O-(geranylgeranyl)-sn-glycerol 1-phosphate + 8 AH2</text>
        <dbReference type="Rhea" id="RHEA:64368"/>
        <dbReference type="ChEBI" id="CHEBI:13193"/>
        <dbReference type="ChEBI" id="CHEBI:17499"/>
        <dbReference type="ChEBI" id="CHEBI:58837"/>
        <dbReference type="ChEBI" id="CHEBI:73125"/>
    </reaction>
    <physiologicalReaction direction="right-to-left" evidence="1">
        <dbReference type="Rhea" id="RHEA:64370"/>
    </physiologicalReaction>
</comment>
<comment type="catalytic activity">
    <reaction evidence="1">
        <text>CDP-2,3-bis-O-(geranylgeranyl)-sn-glycerol + 8 AH2 = CDP-2,3-bis-O-(phytanyl)-sn-glycerol + 8 A</text>
        <dbReference type="Rhea" id="RHEA:84207"/>
        <dbReference type="ChEBI" id="CHEBI:13193"/>
        <dbReference type="ChEBI" id="CHEBI:17499"/>
        <dbReference type="ChEBI" id="CHEBI:58838"/>
        <dbReference type="ChEBI" id="CHEBI:74004"/>
    </reaction>
    <physiologicalReaction direction="left-to-right" evidence="1">
        <dbReference type="Rhea" id="RHEA:84208"/>
    </physiologicalReaction>
</comment>
<comment type="catalytic activity">
    <reaction evidence="1">
        <text>archaetidylserine + 8 AH2 = 2,3-bis-O-phytanyl-sn-glycero-3-phospho-L-serine + 8 A</text>
        <dbReference type="Rhea" id="RHEA:84215"/>
        <dbReference type="ChEBI" id="CHEBI:13193"/>
        <dbReference type="ChEBI" id="CHEBI:17499"/>
        <dbReference type="ChEBI" id="CHEBI:71517"/>
        <dbReference type="ChEBI" id="CHEBI:74853"/>
    </reaction>
    <physiologicalReaction direction="left-to-right" evidence="1">
        <dbReference type="Rhea" id="RHEA:84216"/>
    </physiologicalReaction>
</comment>
<comment type="cofactor">
    <cofactor evidence="1">
        <name>FAD</name>
        <dbReference type="ChEBI" id="CHEBI:57692"/>
    </cofactor>
    <text evidence="1">Binds 1 FAD per subunit.</text>
</comment>
<comment type="pathway">
    <text evidence="1">Membrane lipid metabolism; glycerophospholipid metabolism.</text>
</comment>
<comment type="miscellaneous">
    <text evidence="1">Reduction reaction proceeds via syn addition of hydrogen for double bonds.</text>
</comment>
<comment type="similarity">
    <text evidence="1">Belongs to the geranylgeranyl reductase family. DGGGPL reductase subfamily.</text>
</comment>
<evidence type="ECO:0000255" key="1">
    <source>
        <dbReference type="HAMAP-Rule" id="MF_01287"/>
    </source>
</evidence>
<dbReference type="EC" id="1.3.-.-" evidence="1"/>
<dbReference type="EMBL" id="BA000001">
    <property type="protein sequence ID" value="BAA29250.1"/>
    <property type="molecule type" value="Genomic_DNA"/>
</dbReference>
<dbReference type="PIR" id="C71240">
    <property type="entry name" value="C71240"/>
</dbReference>
<dbReference type="RefSeq" id="WP_010884290.1">
    <property type="nucleotide sequence ID" value="NC_000961.1"/>
</dbReference>
<dbReference type="SMR" id="O57920"/>
<dbReference type="STRING" id="70601.gene:9377091"/>
<dbReference type="DNASU" id="1444072"/>
<dbReference type="EnsemblBacteria" id="BAA29250">
    <property type="protein sequence ID" value="BAA29250"/>
    <property type="gene ID" value="BAA29250"/>
</dbReference>
<dbReference type="GeneID" id="1444072"/>
<dbReference type="KEGG" id="pho:PH0181"/>
<dbReference type="eggNOG" id="arCOG00570">
    <property type="taxonomic scope" value="Archaea"/>
</dbReference>
<dbReference type="OrthoDB" id="6062at2157"/>
<dbReference type="UniPathway" id="UPA00940"/>
<dbReference type="Proteomes" id="UP000000752">
    <property type="component" value="Chromosome"/>
</dbReference>
<dbReference type="GO" id="GO:0016020">
    <property type="term" value="C:membrane"/>
    <property type="evidence" value="ECO:0007669"/>
    <property type="project" value="GOC"/>
</dbReference>
<dbReference type="GO" id="GO:0050660">
    <property type="term" value="F:flavin adenine dinucleotide binding"/>
    <property type="evidence" value="ECO:0007669"/>
    <property type="project" value="UniProtKB-UniRule"/>
</dbReference>
<dbReference type="GO" id="GO:0045550">
    <property type="term" value="F:geranylgeranyl reductase activity"/>
    <property type="evidence" value="ECO:0007669"/>
    <property type="project" value="InterPro"/>
</dbReference>
<dbReference type="GO" id="GO:0016628">
    <property type="term" value="F:oxidoreductase activity, acting on the CH-CH group of donors, NAD or NADP as acceptor"/>
    <property type="evidence" value="ECO:0007669"/>
    <property type="project" value="InterPro"/>
</dbReference>
<dbReference type="GO" id="GO:0046474">
    <property type="term" value="P:glycerophospholipid biosynthetic process"/>
    <property type="evidence" value="ECO:0007669"/>
    <property type="project" value="UniProtKB-UniRule"/>
</dbReference>
<dbReference type="GO" id="GO:0046467">
    <property type="term" value="P:membrane lipid biosynthetic process"/>
    <property type="evidence" value="ECO:0007669"/>
    <property type="project" value="InterPro"/>
</dbReference>
<dbReference type="Gene3D" id="3.30.9.10">
    <property type="entry name" value="D-Amino Acid Oxidase, subunit A, domain 2"/>
    <property type="match status" value="1"/>
</dbReference>
<dbReference type="Gene3D" id="3.50.50.60">
    <property type="entry name" value="FAD/NAD(P)-binding domain"/>
    <property type="match status" value="1"/>
</dbReference>
<dbReference type="HAMAP" id="MF_01287">
    <property type="entry name" value="DGGGPL_reductase"/>
    <property type="match status" value="1"/>
</dbReference>
<dbReference type="InterPro" id="IPR023590">
    <property type="entry name" value="DGGGPL_reductase"/>
</dbReference>
<dbReference type="InterPro" id="IPR036188">
    <property type="entry name" value="FAD/NAD-bd_sf"/>
</dbReference>
<dbReference type="InterPro" id="IPR011777">
    <property type="entry name" value="Geranylgeranyl_Rdtase_fam"/>
</dbReference>
<dbReference type="InterPro" id="IPR050407">
    <property type="entry name" value="Geranylgeranyl_reductase"/>
</dbReference>
<dbReference type="InterPro" id="IPR054715">
    <property type="entry name" value="GGR_cat"/>
</dbReference>
<dbReference type="NCBIfam" id="TIGR02032">
    <property type="entry name" value="GG-red-SF"/>
    <property type="match status" value="1"/>
</dbReference>
<dbReference type="PANTHER" id="PTHR42685:SF18">
    <property type="entry name" value="DIGERANYLGERANYLGLYCEROPHOSPHOLIPID REDUCTASE"/>
    <property type="match status" value="1"/>
</dbReference>
<dbReference type="PANTHER" id="PTHR42685">
    <property type="entry name" value="GERANYLGERANYL DIPHOSPHATE REDUCTASE"/>
    <property type="match status" value="1"/>
</dbReference>
<dbReference type="Pfam" id="PF12831">
    <property type="entry name" value="FAD_oxidored"/>
    <property type="match status" value="1"/>
</dbReference>
<dbReference type="Pfam" id="PF22578">
    <property type="entry name" value="GGR_cat"/>
    <property type="match status" value="1"/>
</dbReference>
<dbReference type="PRINTS" id="PR00420">
    <property type="entry name" value="RNGMNOXGNASE"/>
</dbReference>
<dbReference type="SUPFAM" id="SSF51905">
    <property type="entry name" value="FAD/NAD(P)-binding domain"/>
    <property type="match status" value="1"/>
</dbReference>
<reference key="1">
    <citation type="journal article" date="1998" name="DNA Res.">
        <title>Complete sequence and gene organization of the genome of a hyper-thermophilic archaebacterium, Pyrococcus horikoshii OT3.</title>
        <authorList>
            <person name="Kawarabayasi Y."/>
            <person name="Sawada M."/>
            <person name="Horikawa H."/>
            <person name="Haikawa Y."/>
            <person name="Hino Y."/>
            <person name="Yamamoto S."/>
            <person name="Sekine M."/>
            <person name="Baba S."/>
            <person name="Kosugi H."/>
            <person name="Hosoyama A."/>
            <person name="Nagai Y."/>
            <person name="Sakai M."/>
            <person name="Ogura K."/>
            <person name="Otsuka R."/>
            <person name="Nakazawa H."/>
            <person name="Takamiya M."/>
            <person name="Ohfuku Y."/>
            <person name="Funahashi T."/>
            <person name="Tanaka T."/>
            <person name="Kudoh Y."/>
            <person name="Yamazaki J."/>
            <person name="Kushida N."/>
            <person name="Oguchi A."/>
            <person name="Aoki K."/>
            <person name="Yoshizawa T."/>
            <person name="Nakamura Y."/>
            <person name="Robb F.T."/>
            <person name="Horikoshi K."/>
            <person name="Masuchi Y."/>
            <person name="Shizuya H."/>
            <person name="Kikuchi H."/>
        </authorList>
    </citation>
    <scope>NUCLEOTIDE SEQUENCE [LARGE SCALE GENOMIC DNA]</scope>
    <source>
        <strain>ATCC 700860 / DSM 12428 / JCM 9974 / NBRC 100139 / OT-3</strain>
    </source>
</reference>
<feature type="chain" id="PRO_0000351477" description="Digeranylgeranylglycerophospholipid reductase">
    <location>
        <begin position="1"/>
        <end position="393"/>
    </location>
</feature>
<feature type="binding site" evidence="1">
    <location>
        <position position="13"/>
    </location>
    <ligand>
        <name>FAD</name>
        <dbReference type="ChEBI" id="CHEBI:57692"/>
    </ligand>
</feature>
<feature type="binding site" evidence="1">
    <location>
        <position position="32"/>
    </location>
    <ligand>
        <name>FAD</name>
        <dbReference type="ChEBI" id="CHEBI:57692"/>
    </ligand>
</feature>
<feature type="binding site" evidence="1">
    <location>
        <position position="43"/>
    </location>
    <ligand>
        <name>FAD</name>
        <dbReference type="ChEBI" id="CHEBI:57692"/>
    </ligand>
</feature>
<feature type="binding site" evidence="1">
    <location>
        <position position="44"/>
    </location>
    <ligand>
        <name>FAD</name>
        <dbReference type="ChEBI" id="CHEBI:57692"/>
    </ligand>
</feature>
<feature type="binding site" evidence="1">
    <location>
        <position position="46"/>
    </location>
    <ligand>
        <name>FAD</name>
        <dbReference type="ChEBI" id="CHEBI:57692"/>
    </ligand>
</feature>
<feature type="binding site" evidence="1">
    <location>
        <position position="95"/>
    </location>
    <ligand>
        <name>FAD</name>
        <dbReference type="ChEBI" id="CHEBI:57692"/>
    </ligand>
</feature>
<feature type="binding site" evidence="1">
    <location>
        <position position="119"/>
    </location>
    <ligand>
        <name>FAD</name>
        <dbReference type="ChEBI" id="CHEBI:57692"/>
    </ligand>
</feature>
<feature type="binding site" evidence="1">
    <location>
        <position position="274"/>
    </location>
    <ligand>
        <name>FAD</name>
        <dbReference type="ChEBI" id="CHEBI:57692"/>
    </ligand>
</feature>
<feature type="binding site" evidence="1">
    <location>
        <position position="286"/>
    </location>
    <ligand>
        <name>FAD</name>
        <dbReference type="ChEBI" id="CHEBI:57692"/>
    </ligand>
</feature>
<feature type="binding site" evidence="1">
    <location>
        <position position="327"/>
    </location>
    <ligand>
        <name>a 2,3-bis-O-(geranylgeranyl)-sn-glycerol 1-phospholipid</name>
        <dbReference type="ChEBI" id="CHEBI:138140"/>
    </ligand>
</feature>
<feature type="binding site" evidence="1">
    <location>
        <position position="363"/>
    </location>
    <ligand>
        <name>a 2,3-bis-O-(geranylgeranyl)-sn-glycerol 1-phospholipid</name>
        <dbReference type="ChEBI" id="CHEBI:138140"/>
    </ligand>
</feature>